<proteinExistence type="inferred from homology"/>
<name>RLMM_ECO24</name>
<dbReference type="EC" id="2.1.1.186" evidence="1"/>
<dbReference type="EMBL" id="CP000800">
    <property type="protein sequence ID" value="ABV18799.1"/>
    <property type="molecule type" value="Genomic_DNA"/>
</dbReference>
<dbReference type="RefSeq" id="WP_001045520.1">
    <property type="nucleotide sequence ID" value="NC_009801.1"/>
</dbReference>
<dbReference type="SMR" id="A7ZQQ1"/>
<dbReference type="GeneID" id="75203803"/>
<dbReference type="KEGG" id="ecw:EcE24377A_3112"/>
<dbReference type="HOGENOM" id="CLU_043780_0_0_6"/>
<dbReference type="Proteomes" id="UP000001122">
    <property type="component" value="Chromosome"/>
</dbReference>
<dbReference type="GO" id="GO:0005737">
    <property type="term" value="C:cytoplasm"/>
    <property type="evidence" value="ECO:0007669"/>
    <property type="project" value="UniProtKB-SubCell"/>
</dbReference>
<dbReference type="GO" id="GO:0008757">
    <property type="term" value="F:S-adenosylmethionine-dependent methyltransferase activity"/>
    <property type="evidence" value="ECO:0007669"/>
    <property type="project" value="UniProtKB-UniRule"/>
</dbReference>
<dbReference type="GO" id="GO:0032259">
    <property type="term" value="P:methylation"/>
    <property type="evidence" value="ECO:0007669"/>
    <property type="project" value="UniProtKB-KW"/>
</dbReference>
<dbReference type="GO" id="GO:0006364">
    <property type="term" value="P:rRNA processing"/>
    <property type="evidence" value="ECO:0007669"/>
    <property type="project" value="UniProtKB-UniRule"/>
</dbReference>
<dbReference type="FunFam" id="3.30.2300.20:FF:000001">
    <property type="entry name" value="Ribosomal RNA large subunit methyltransferase M"/>
    <property type="match status" value="1"/>
</dbReference>
<dbReference type="FunFam" id="3.30.70.2810:FF:000001">
    <property type="entry name" value="Ribosomal RNA large subunit methyltransferase M"/>
    <property type="match status" value="1"/>
</dbReference>
<dbReference type="FunFam" id="3.40.50.150:FF:000020">
    <property type="entry name" value="Ribosomal RNA large subunit methyltransferase M"/>
    <property type="match status" value="1"/>
</dbReference>
<dbReference type="Gene3D" id="3.30.2300.20">
    <property type="match status" value="1"/>
</dbReference>
<dbReference type="Gene3D" id="3.30.70.2810">
    <property type="match status" value="1"/>
</dbReference>
<dbReference type="Gene3D" id="3.40.50.150">
    <property type="entry name" value="Vaccinia Virus protein VP39"/>
    <property type="match status" value="1"/>
</dbReference>
<dbReference type="HAMAP" id="MF_01551">
    <property type="entry name" value="23SrRNA_methyltr_M"/>
    <property type="match status" value="1"/>
</dbReference>
<dbReference type="InterPro" id="IPR040739">
    <property type="entry name" value="RlmM_FDX"/>
</dbReference>
<dbReference type="InterPro" id="IPR048646">
    <property type="entry name" value="RlmM_THUMP-like"/>
</dbReference>
<dbReference type="InterPro" id="IPR002877">
    <property type="entry name" value="RNA_MeTrfase_FtsJ_dom"/>
</dbReference>
<dbReference type="InterPro" id="IPR011224">
    <property type="entry name" value="rRNA_MeTrfase_M"/>
</dbReference>
<dbReference type="InterPro" id="IPR029063">
    <property type="entry name" value="SAM-dependent_MTases_sf"/>
</dbReference>
<dbReference type="NCBIfam" id="NF008734">
    <property type="entry name" value="PRK11760.1"/>
    <property type="match status" value="1"/>
</dbReference>
<dbReference type="PANTHER" id="PTHR37524">
    <property type="entry name" value="RIBOSOMAL RNA LARGE SUBUNIT METHYLTRANSFERASE M"/>
    <property type="match status" value="1"/>
</dbReference>
<dbReference type="PANTHER" id="PTHR37524:SF2">
    <property type="entry name" value="RIBOSOMAL RNA METHYLTRANSFERASE FTSJ DOMAIN-CONTAINING PROTEIN"/>
    <property type="match status" value="1"/>
</dbReference>
<dbReference type="Pfam" id="PF01728">
    <property type="entry name" value="FtsJ"/>
    <property type="match status" value="1"/>
</dbReference>
<dbReference type="Pfam" id="PF18125">
    <property type="entry name" value="RlmM_FDX"/>
    <property type="match status" value="1"/>
</dbReference>
<dbReference type="Pfam" id="PF21239">
    <property type="entry name" value="RLMM_N"/>
    <property type="match status" value="1"/>
</dbReference>
<dbReference type="PIRSF" id="PIRSF028774">
    <property type="entry name" value="UCP028774"/>
    <property type="match status" value="1"/>
</dbReference>
<dbReference type="SUPFAM" id="SSF53335">
    <property type="entry name" value="S-adenosyl-L-methionine-dependent methyltransferases"/>
    <property type="match status" value="1"/>
</dbReference>
<evidence type="ECO:0000255" key="1">
    <source>
        <dbReference type="HAMAP-Rule" id="MF_01551"/>
    </source>
</evidence>
<gene>
    <name evidence="1" type="primary">rlmM</name>
    <name type="ordered locus">EcE24377A_3112</name>
</gene>
<organism>
    <name type="scientific">Escherichia coli O139:H28 (strain E24377A / ETEC)</name>
    <dbReference type="NCBI Taxonomy" id="331111"/>
    <lineage>
        <taxon>Bacteria</taxon>
        <taxon>Pseudomonadati</taxon>
        <taxon>Pseudomonadota</taxon>
        <taxon>Gammaproteobacteria</taxon>
        <taxon>Enterobacterales</taxon>
        <taxon>Enterobacteriaceae</taxon>
        <taxon>Escherichia</taxon>
    </lineage>
</organism>
<keyword id="KW-0963">Cytoplasm</keyword>
<keyword id="KW-0489">Methyltransferase</keyword>
<keyword id="KW-1185">Reference proteome</keyword>
<keyword id="KW-0698">rRNA processing</keyword>
<keyword id="KW-0949">S-adenosyl-L-methionine</keyword>
<keyword id="KW-0808">Transferase</keyword>
<reference key="1">
    <citation type="journal article" date="2008" name="J. Bacteriol.">
        <title>The pangenome structure of Escherichia coli: comparative genomic analysis of E. coli commensal and pathogenic isolates.</title>
        <authorList>
            <person name="Rasko D.A."/>
            <person name="Rosovitz M.J."/>
            <person name="Myers G.S.A."/>
            <person name="Mongodin E.F."/>
            <person name="Fricke W.F."/>
            <person name="Gajer P."/>
            <person name="Crabtree J."/>
            <person name="Sebaihia M."/>
            <person name="Thomson N.R."/>
            <person name="Chaudhuri R."/>
            <person name="Henderson I.R."/>
            <person name="Sperandio V."/>
            <person name="Ravel J."/>
        </authorList>
    </citation>
    <scope>NUCLEOTIDE SEQUENCE [LARGE SCALE GENOMIC DNA]</scope>
    <source>
        <strain>E24377A / ETEC</strain>
    </source>
</reference>
<feature type="chain" id="PRO_1000073561" description="Ribosomal RNA large subunit methyltransferase M">
    <location>
        <begin position="1"/>
        <end position="366"/>
    </location>
</feature>
<feature type="active site" description="Proton acceptor" evidence="1">
    <location>
        <position position="306"/>
    </location>
</feature>
<feature type="binding site" evidence="1">
    <location>
        <position position="188"/>
    </location>
    <ligand>
        <name>S-adenosyl-L-methionine</name>
        <dbReference type="ChEBI" id="CHEBI:59789"/>
    </ligand>
</feature>
<feature type="binding site" evidence="1">
    <location>
        <begin position="221"/>
        <end position="224"/>
    </location>
    <ligand>
        <name>S-adenosyl-L-methionine</name>
        <dbReference type="ChEBI" id="CHEBI:59789"/>
    </ligand>
</feature>
<feature type="binding site" evidence="1">
    <location>
        <position position="240"/>
    </location>
    <ligand>
        <name>S-adenosyl-L-methionine</name>
        <dbReference type="ChEBI" id="CHEBI:59789"/>
    </ligand>
</feature>
<feature type="binding site" evidence="1">
    <location>
        <position position="260"/>
    </location>
    <ligand>
        <name>S-adenosyl-L-methionine</name>
        <dbReference type="ChEBI" id="CHEBI:59789"/>
    </ligand>
</feature>
<feature type="binding site" evidence="1">
    <location>
        <position position="277"/>
    </location>
    <ligand>
        <name>S-adenosyl-L-methionine</name>
        <dbReference type="ChEBI" id="CHEBI:59789"/>
    </ligand>
</feature>
<sequence>MNKVVLLCRPGFEKECAAEITDKAGQREIFGFARVKENAGYVIYECYQPDDGDKLIRELPFSSLIFARQWFVVGELLQHLPPEDRITPIVGMLQGVVEKGGELRVEVADTNESKELLKFCRKFTVPLRAALRDAGVLANYETPKRPVVHVFFIAPGCCYTGYSYSNNNSPFYMGIPRLKFPADAPSRSTLKLEEAFHVFIPADEWDERLANGMWAVDLGACPGGWTYQLVKRNMWVYSVDNGPMAQSLMDTGQVTWLREDGFKFRPTRSNISWMVCDMVEKPAKVAALMAQWLVNGWCRETIFNLKLPMKKRYEEVSHNLAYIQAQLDEHGINAQIQARQLYHDREEVTVHVRRIWAAVGGRRDER</sequence>
<comment type="function">
    <text evidence="1">Catalyzes the 2'-O-methylation at nucleotide C2498 in 23S rRNA.</text>
</comment>
<comment type="catalytic activity">
    <reaction evidence="1">
        <text>cytidine(2498) in 23S rRNA + S-adenosyl-L-methionine = 2'-O-methylcytidine(2498) in 23S rRNA + S-adenosyl-L-homocysteine + H(+)</text>
        <dbReference type="Rhea" id="RHEA:42788"/>
        <dbReference type="Rhea" id="RHEA-COMP:10244"/>
        <dbReference type="Rhea" id="RHEA-COMP:10245"/>
        <dbReference type="ChEBI" id="CHEBI:15378"/>
        <dbReference type="ChEBI" id="CHEBI:57856"/>
        <dbReference type="ChEBI" id="CHEBI:59789"/>
        <dbReference type="ChEBI" id="CHEBI:74495"/>
        <dbReference type="ChEBI" id="CHEBI:82748"/>
        <dbReference type="EC" id="2.1.1.186"/>
    </reaction>
</comment>
<comment type="subunit">
    <text evidence="1">Monomer.</text>
</comment>
<comment type="subcellular location">
    <subcellularLocation>
        <location evidence="1">Cytoplasm</location>
    </subcellularLocation>
</comment>
<comment type="similarity">
    <text evidence="1">Belongs to the class I-like SAM-binding methyltransferase superfamily. RNA methyltransferase RlmE family. RlmM subfamily.</text>
</comment>
<accession>A7ZQQ1</accession>
<protein>
    <recommendedName>
        <fullName evidence="1">Ribosomal RNA large subunit methyltransferase M</fullName>
        <ecNumber evidence="1">2.1.1.186</ecNumber>
    </recommendedName>
    <alternativeName>
        <fullName evidence="1">23S rRNA (cytidine2498-2'-O)-methyltransferase</fullName>
    </alternativeName>
    <alternativeName>
        <fullName evidence="1">23S rRNA 2'-O-ribose methyltransferase RlmM</fullName>
    </alternativeName>
</protein>